<evidence type="ECO:0000255" key="1">
    <source>
        <dbReference type="HAMAP-Rule" id="MF_00061"/>
    </source>
</evidence>
<organism>
    <name type="scientific">Chlamydia trachomatis serovar D (strain ATCC VR-885 / DSM 19411 / UW-3/Cx)</name>
    <dbReference type="NCBI Taxonomy" id="272561"/>
    <lineage>
        <taxon>Bacteria</taxon>
        <taxon>Pseudomonadati</taxon>
        <taxon>Chlamydiota</taxon>
        <taxon>Chlamydiia</taxon>
        <taxon>Chlamydiales</taxon>
        <taxon>Chlamydiaceae</taxon>
        <taxon>Chlamydia/Chlamydophila group</taxon>
        <taxon>Chlamydia</taxon>
    </lineage>
</organism>
<proteinExistence type="inferred from homology"/>
<reference key="1">
    <citation type="journal article" date="1998" name="Science">
        <title>Genome sequence of an obligate intracellular pathogen of humans: Chlamydia trachomatis.</title>
        <authorList>
            <person name="Stephens R.S."/>
            <person name="Kalman S."/>
            <person name="Lammel C.J."/>
            <person name="Fan J."/>
            <person name="Marathe R."/>
            <person name="Aravind L."/>
            <person name="Mitchell W.P."/>
            <person name="Olinger L."/>
            <person name="Tatusov R.L."/>
            <person name="Zhao Q."/>
            <person name="Koonin E.V."/>
            <person name="Davis R.W."/>
        </authorList>
    </citation>
    <scope>NUCLEOTIDE SEQUENCE [LARGE SCALE GENOMIC DNA]</scope>
    <source>
        <strain>ATCC VR-885 / DSM 19411 / UW-3/Cx</strain>
    </source>
</reference>
<dbReference type="EC" id="2.7.1.148" evidence="1"/>
<dbReference type="EMBL" id="AE001273">
    <property type="protein sequence ID" value="AAC68399.1"/>
    <property type="molecule type" value="Genomic_DNA"/>
</dbReference>
<dbReference type="PIR" id="B71470">
    <property type="entry name" value="B71470"/>
</dbReference>
<dbReference type="RefSeq" id="WP_009872186.1">
    <property type="nucleotide sequence ID" value="NC_000117.1"/>
</dbReference>
<dbReference type="SMR" id="O84810"/>
<dbReference type="FunCoup" id="O84810">
    <property type="interactions" value="254"/>
</dbReference>
<dbReference type="STRING" id="272561.CT_804"/>
<dbReference type="EnsemblBacteria" id="AAC68399">
    <property type="protein sequence ID" value="AAC68399"/>
    <property type="gene ID" value="CT_804"/>
</dbReference>
<dbReference type="KEGG" id="ctr:CT_804"/>
<dbReference type="PATRIC" id="fig|272561.5.peg.885"/>
<dbReference type="HOGENOM" id="CLU_053057_3_0_0"/>
<dbReference type="InParanoid" id="O84810"/>
<dbReference type="OrthoDB" id="9809438at2"/>
<dbReference type="UniPathway" id="UPA00056">
    <property type="reaction ID" value="UER00094"/>
</dbReference>
<dbReference type="Proteomes" id="UP000000431">
    <property type="component" value="Chromosome"/>
</dbReference>
<dbReference type="GO" id="GO:0050515">
    <property type="term" value="F:4-(cytidine 5'-diphospho)-2-C-methyl-D-erythritol kinase activity"/>
    <property type="evidence" value="ECO:0000318"/>
    <property type="project" value="GO_Central"/>
</dbReference>
<dbReference type="GO" id="GO:0005524">
    <property type="term" value="F:ATP binding"/>
    <property type="evidence" value="ECO:0007669"/>
    <property type="project" value="UniProtKB-UniRule"/>
</dbReference>
<dbReference type="GO" id="GO:0019288">
    <property type="term" value="P:isopentenyl diphosphate biosynthetic process, methylerythritol 4-phosphate pathway"/>
    <property type="evidence" value="ECO:0007669"/>
    <property type="project" value="UniProtKB-UniRule"/>
</dbReference>
<dbReference type="GO" id="GO:0016114">
    <property type="term" value="P:terpenoid biosynthetic process"/>
    <property type="evidence" value="ECO:0007669"/>
    <property type="project" value="InterPro"/>
</dbReference>
<dbReference type="Gene3D" id="3.30.230.10">
    <property type="match status" value="1"/>
</dbReference>
<dbReference type="Gene3D" id="3.30.70.890">
    <property type="entry name" value="GHMP kinase, C-terminal domain"/>
    <property type="match status" value="1"/>
</dbReference>
<dbReference type="HAMAP" id="MF_00061">
    <property type="entry name" value="IspE"/>
    <property type="match status" value="1"/>
</dbReference>
<dbReference type="InterPro" id="IPR036554">
    <property type="entry name" value="GHMP_kinase_C_sf"/>
</dbReference>
<dbReference type="InterPro" id="IPR006204">
    <property type="entry name" value="GHMP_kinase_N_dom"/>
</dbReference>
<dbReference type="InterPro" id="IPR004424">
    <property type="entry name" value="IspE"/>
</dbReference>
<dbReference type="InterPro" id="IPR020568">
    <property type="entry name" value="Ribosomal_Su5_D2-typ_SF"/>
</dbReference>
<dbReference type="InterPro" id="IPR014721">
    <property type="entry name" value="Ribsml_uS5_D2-typ_fold_subgr"/>
</dbReference>
<dbReference type="NCBIfam" id="TIGR00154">
    <property type="entry name" value="ispE"/>
    <property type="match status" value="1"/>
</dbReference>
<dbReference type="PANTHER" id="PTHR43527">
    <property type="entry name" value="4-DIPHOSPHOCYTIDYL-2-C-METHYL-D-ERYTHRITOL KINASE, CHLOROPLASTIC"/>
    <property type="match status" value="1"/>
</dbReference>
<dbReference type="PANTHER" id="PTHR43527:SF2">
    <property type="entry name" value="4-DIPHOSPHOCYTIDYL-2-C-METHYL-D-ERYTHRITOL KINASE, CHLOROPLASTIC"/>
    <property type="match status" value="1"/>
</dbReference>
<dbReference type="Pfam" id="PF00288">
    <property type="entry name" value="GHMP_kinases_N"/>
    <property type="match status" value="1"/>
</dbReference>
<dbReference type="PIRSF" id="PIRSF010376">
    <property type="entry name" value="IspE"/>
    <property type="match status" value="1"/>
</dbReference>
<dbReference type="SUPFAM" id="SSF55060">
    <property type="entry name" value="GHMP Kinase, C-terminal domain"/>
    <property type="match status" value="1"/>
</dbReference>
<dbReference type="SUPFAM" id="SSF54211">
    <property type="entry name" value="Ribosomal protein S5 domain 2-like"/>
    <property type="match status" value="1"/>
</dbReference>
<protein>
    <recommendedName>
        <fullName evidence="1">4-diphosphocytidyl-2-C-methyl-D-erythritol kinase</fullName>
        <shortName evidence="1">CMK</shortName>
        <ecNumber evidence="1">2.7.1.148</ecNumber>
    </recommendedName>
    <alternativeName>
        <fullName evidence="1">4-(cytidine-5'-diphospho)-2-C-methyl-D-erythritol kinase</fullName>
    </alternativeName>
</protein>
<comment type="function">
    <text evidence="1">Catalyzes the phosphorylation of the position 2 hydroxy group of 4-diphosphocytidyl-2C-methyl-D-erythritol.</text>
</comment>
<comment type="catalytic activity">
    <reaction evidence="1">
        <text>4-CDP-2-C-methyl-D-erythritol + ATP = 4-CDP-2-C-methyl-D-erythritol 2-phosphate + ADP + H(+)</text>
        <dbReference type="Rhea" id="RHEA:18437"/>
        <dbReference type="ChEBI" id="CHEBI:15378"/>
        <dbReference type="ChEBI" id="CHEBI:30616"/>
        <dbReference type="ChEBI" id="CHEBI:57823"/>
        <dbReference type="ChEBI" id="CHEBI:57919"/>
        <dbReference type="ChEBI" id="CHEBI:456216"/>
        <dbReference type="EC" id="2.7.1.148"/>
    </reaction>
</comment>
<comment type="pathway">
    <text evidence="1">Isoprenoid biosynthesis; isopentenyl diphosphate biosynthesis via DXP pathway; isopentenyl diphosphate from 1-deoxy-D-xylulose 5-phosphate: step 3/6.</text>
</comment>
<comment type="similarity">
    <text evidence="1">Belongs to the GHMP kinase family. IspE subfamily.</text>
</comment>
<feature type="chain" id="PRO_0000189205" description="4-diphosphocytidyl-2-C-methyl-D-erythritol kinase">
    <location>
        <begin position="1"/>
        <end position="288"/>
    </location>
</feature>
<feature type="active site" evidence="1">
    <location>
        <position position="8"/>
    </location>
</feature>
<feature type="active site" evidence="1">
    <location>
        <position position="132"/>
    </location>
</feature>
<feature type="binding site" evidence="1">
    <location>
        <begin position="90"/>
        <end position="100"/>
    </location>
    <ligand>
        <name>ATP</name>
        <dbReference type="ChEBI" id="CHEBI:30616"/>
    </ligand>
</feature>
<name>ISPE_CHLTR</name>
<sequence length="288" mass="31868">MHFLSPAKLNLFLQILGRREDDFHEIVTRYQAIAFGDQLSLSISSRDSLQVINACHLETPSNSIWKSVALFRRYTGITTPVSWRVVKQIPVGAGLAGGSSNAATALFALNQIFKTGLSDEEMRSLAEQLGVDTPFFFSTGAALGVARGEKIIALEESVSDRYVLYFSSEGVLTSRAFAAVQPSDCSSRKNLEYTQNDLEKPVFRLRLDLKEKKHWLENLWAELPVHIGLTGSGATLFVRYPEILEEDLSYAAQIQRAVTLSGGLLTSPIRRDPTAWYSIYSESALAAT</sequence>
<keyword id="KW-0067">ATP-binding</keyword>
<keyword id="KW-0414">Isoprene biosynthesis</keyword>
<keyword id="KW-0418">Kinase</keyword>
<keyword id="KW-0547">Nucleotide-binding</keyword>
<keyword id="KW-1185">Reference proteome</keyword>
<keyword id="KW-0808">Transferase</keyword>
<accession>O84810</accession>
<gene>
    <name evidence="1" type="primary">ispE</name>
    <name type="ordered locus">CT_804</name>
</gene>